<gene>
    <name type="primary">dapB</name>
    <name type="ORF">An02g11420</name>
</gene>
<name>DAPB_ASPNC</name>
<accession>A2QEK7</accession>
<keyword id="KW-0031">Aminopeptidase</keyword>
<keyword id="KW-0325">Glycoprotein</keyword>
<keyword id="KW-0378">Hydrolase</keyword>
<keyword id="KW-0472">Membrane</keyword>
<keyword id="KW-0645">Protease</keyword>
<keyword id="KW-1185">Reference proteome</keyword>
<keyword id="KW-0720">Serine protease</keyword>
<keyword id="KW-0735">Signal-anchor</keyword>
<keyword id="KW-0812">Transmembrane</keyword>
<keyword id="KW-1133">Transmembrane helix</keyword>
<keyword id="KW-0926">Vacuole</keyword>
<organism>
    <name type="scientific">Aspergillus niger (strain ATCC MYA-4892 / CBS 513.88 / FGSC A1513)</name>
    <dbReference type="NCBI Taxonomy" id="425011"/>
    <lineage>
        <taxon>Eukaryota</taxon>
        <taxon>Fungi</taxon>
        <taxon>Dikarya</taxon>
        <taxon>Ascomycota</taxon>
        <taxon>Pezizomycotina</taxon>
        <taxon>Eurotiomycetes</taxon>
        <taxon>Eurotiomycetidae</taxon>
        <taxon>Eurotiales</taxon>
        <taxon>Aspergillaceae</taxon>
        <taxon>Aspergillus</taxon>
        <taxon>Aspergillus subgen. Circumdati</taxon>
    </lineage>
</organism>
<comment type="function">
    <text evidence="1">Type IV dipeptidyl-peptidase which removes N-terminal dipeptides sequentially from polypeptides having unsubstituted N-termini provided that the penultimate residue is proline.</text>
</comment>
<comment type="catalytic activity">
    <reaction>
        <text>Release of an N-terminal dipeptide, Xaa-Yaa-|-Zaa-, from a polypeptide, preferentially when Yaa is Pro, provided Zaa is neither Pro nor hydroxyproline.</text>
        <dbReference type="EC" id="3.4.14.5"/>
    </reaction>
</comment>
<comment type="subcellular location">
    <subcellularLocation>
        <location evidence="1">Vacuole membrane</location>
        <topology evidence="1">Single-pass type II membrane protein</topology>
    </subcellularLocation>
    <text evidence="1">Lysosome-like vacuoles.</text>
</comment>
<comment type="similarity">
    <text evidence="4">Belongs to the peptidase S9B family.</text>
</comment>
<evidence type="ECO:0000250" key="1"/>
<evidence type="ECO:0000255" key="2"/>
<evidence type="ECO:0000256" key="3">
    <source>
        <dbReference type="SAM" id="MobiDB-lite"/>
    </source>
</evidence>
<evidence type="ECO:0000305" key="4"/>
<protein>
    <recommendedName>
        <fullName>Probable dipeptidyl-aminopeptidase B</fullName>
        <shortName>DPAP B</shortName>
        <ecNumber>3.4.14.5</ecNumber>
    </recommendedName>
</protein>
<dbReference type="EC" id="3.4.14.5"/>
<dbReference type="EMBL" id="AM270029">
    <property type="protein sequence ID" value="CAK37870.1"/>
    <property type="molecule type" value="Genomic_DNA"/>
</dbReference>
<dbReference type="RefSeq" id="XP_001400269.2">
    <property type="nucleotide sequence ID" value="XM_001400232.2"/>
</dbReference>
<dbReference type="SMR" id="A2QEK7"/>
<dbReference type="ESTHER" id="aspng-DAPB">
    <property type="family name" value="DPP4N_Peptidase_S9"/>
</dbReference>
<dbReference type="MEROPS" id="S09.006"/>
<dbReference type="GlyCosmos" id="A2QEK7">
    <property type="glycosylation" value="3 sites, No reported glycans"/>
</dbReference>
<dbReference type="EnsemblFungi" id="CAK37870">
    <property type="protein sequence ID" value="CAK37870"/>
    <property type="gene ID" value="An02g11420"/>
</dbReference>
<dbReference type="GeneID" id="4979677"/>
<dbReference type="KEGG" id="ang:An02g11420"/>
<dbReference type="HOGENOM" id="CLU_006105_0_1_1"/>
<dbReference type="Proteomes" id="UP000006706">
    <property type="component" value="Chromosome 4R"/>
</dbReference>
<dbReference type="GO" id="GO:0000329">
    <property type="term" value="C:fungal-type vacuole membrane"/>
    <property type="evidence" value="ECO:0007669"/>
    <property type="project" value="EnsemblFungi"/>
</dbReference>
<dbReference type="GO" id="GO:0005886">
    <property type="term" value="C:plasma membrane"/>
    <property type="evidence" value="ECO:0007669"/>
    <property type="project" value="TreeGrafter"/>
</dbReference>
<dbReference type="GO" id="GO:0004177">
    <property type="term" value="F:aminopeptidase activity"/>
    <property type="evidence" value="ECO:0007669"/>
    <property type="project" value="UniProtKB-KW"/>
</dbReference>
<dbReference type="GO" id="GO:0008239">
    <property type="term" value="F:dipeptidyl-peptidase activity"/>
    <property type="evidence" value="ECO:0007669"/>
    <property type="project" value="UniProtKB-EC"/>
</dbReference>
<dbReference type="GO" id="GO:0008236">
    <property type="term" value="F:serine-type peptidase activity"/>
    <property type="evidence" value="ECO:0007669"/>
    <property type="project" value="UniProtKB-KW"/>
</dbReference>
<dbReference type="GO" id="GO:0006508">
    <property type="term" value="P:proteolysis"/>
    <property type="evidence" value="ECO:0007669"/>
    <property type="project" value="UniProtKB-KW"/>
</dbReference>
<dbReference type="FunFam" id="3.40.50.1820:FF:000003">
    <property type="entry name" value="Dipeptidyl peptidase 4"/>
    <property type="match status" value="1"/>
</dbReference>
<dbReference type="Gene3D" id="3.40.50.1820">
    <property type="entry name" value="alpha/beta hydrolase"/>
    <property type="match status" value="1"/>
</dbReference>
<dbReference type="Gene3D" id="2.140.10.30">
    <property type="entry name" value="Dipeptidylpeptidase IV, N-terminal domain"/>
    <property type="match status" value="1"/>
</dbReference>
<dbReference type="InterPro" id="IPR029058">
    <property type="entry name" value="AB_hydrolase_fold"/>
</dbReference>
<dbReference type="InterPro" id="IPR001375">
    <property type="entry name" value="Peptidase_S9_cat"/>
</dbReference>
<dbReference type="InterPro" id="IPR002469">
    <property type="entry name" value="Peptidase_S9B_N"/>
</dbReference>
<dbReference type="InterPro" id="IPR050278">
    <property type="entry name" value="Serine_Prot_S9B/DPPIV"/>
</dbReference>
<dbReference type="PANTHER" id="PTHR11731:SF200">
    <property type="entry name" value="DIPEPTIDYL PEPTIDASE 10, ISOFORM B"/>
    <property type="match status" value="1"/>
</dbReference>
<dbReference type="PANTHER" id="PTHR11731">
    <property type="entry name" value="PROTEASE FAMILY S9B,C DIPEPTIDYL-PEPTIDASE IV-RELATED"/>
    <property type="match status" value="1"/>
</dbReference>
<dbReference type="Pfam" id="PF00930">
    <property type="entry name" value="DPPIV_N"/>
    <property type="match status" value="1"/>
</dbReference>
<dbReference type="Pfam" id="PF00326">
    <property type="entry name" value="Peptidase_S9"/>
    <property type="match status" value="1"/>
</dbReference>
<dbReference type="SUPFAM" id="SSF53474">
    <property type="entry name" value="alpha/beta-Hydrolases"/>
    <property type="match status" value="1"/>
</dbReference>
<dbReference type="SUPFAM" id="SSF82171">
    <property type="entry name" value="DPP6 N-terminal domain-like"/>
    <property type="match status" value="1"/>
</dbReference>
<reference key="1">
    <citation type="journal article" date="2007" name="Nat. Biotechnol.">
        <title>Genome sequencing and analysis of the versatile cell factory Aspergillus niger CBS 513.88.</title>
        <authorList>
            <person name="Pel H.J."/>
            <person name="de Winde J.H."/>
            <person name="Archer D.B."/>
            <person name="Dyer P.S."/>
            <person name="Hofmann G."/>
            <person name="Schaap P.J."/>
            <person name="Turner G."/>
            <person name="de Vries R.P."/>
            <person name="Albang R."/>
            <person name="Albermann K."/>
            <person name="Andersen M.R."/>
            <person name="Bendtsen J.D."/>
            <person name="Benen J.A.E."/>
            <person name="van den Berg M."/>
            <person name="Breestraat S."/>
            <person name="Caddick M.X."/>
            <person name="Contreras R."/>
            <person name="Cornell M."/>
            <person name="Coutinho P.M."/>
            <person name="Danchin E.G.J."/>
            <person name="Debets A.J.M."/>
            <person name="Dekker P."/>
            <person name="van Dijck P.W.M."/>
            <person name="van Dijk A."/>
            <person name="Dijkhuizen L."/>
            <person name="Driessen A.J.M."/>
            <person name="d'Enfert C."/>
            <person name="Geysens S."/>
            <person name="Goosen C."/>
            <person name="Groot G.S.P."/>
            <person name="de Groot P.W.J."/>
            <person name="Guillemette T."/>
            <person name="Henrissat B."/>
            <person name="Herweijer M."/>
            <person name="van den Hombergh J.P.T.W."/>
            <person name="van den Hondel C.A.M.J.J."/>
            <person name="van der Heijden R.T.J.M."/>
            <person name="van der Kaaij R.M."/>
            <person name="Klis F.M."/>
            <person name="Kools H.J."/>
            <person name="Kubicek C.P."/>
            <person name="van Kuyk P.A."/>
            <person name="Lauber J."/>
            <person name="Lu X."/>
            <person name="van der Maarel M.J.E.C."/>
            <person name="Meulenberg R."/>
            <person name="Menke H."/>
            <person name="Mortimer M.A."/>
            <person name="Nielsen J."/>
            <person name="Oliver S.G."/>
            <person name="Olsthoorn M."/>
            <person name="Pal K."/>
            <person name="van Peij N.N.M.E."/>
            <person name="Ram A.F.J."/>
            <person name="Rinas U."/>
            <person name="Roubos J.A."/>
            <person name="Sagt C.M.J."/>
            <person name="Schmoll M."/>
            <person name="Sun J."/>
            <person name="Ussery D."/>
            <person name="Varga J."/>
            <person name="Vervecken W."/>
            <person name="van de Vondervoort P.J.J."/>
            <person name="Wedler H."/>
            <person name="Woesten H.A.B."/>
            <person name="Zeng A.-P."/>
            <person name="van Ooyen A.J.J."/>
            <person name="Visser J."/>
            <person name="Stam H."/>
        </authorList>
    </citation>
    <scope>NUCLEOTIDE SEQUENCE [LARGE SCALE GENOMIC DNA]</scope>
    <source>
        <strain>ATCC MYA-4892 / CBS 513.88 / FGSC A1513</strain>
    </source>
</reference>
<feature type="chain" id="PRO_0000412136" description="Probable dipeptidyl-aminopeptidase B">
    <location>
        <begin position="1"/>
        <end position="901"/>
    </location>
</feature>
<feature type="topological domain" description="Cytoplasmic" evidence="2">
    <location>
        <begin position="1"/>
        <end position="76"/>
    </location>
</feature>
<feature type="transmembrane region" description="Helical; Signal-anchor for type II membrane protein" evidence="2">
    <location>
        <begin position="77"/>
        <end position="97"/>
    </location>
</feature>
<feature type="topological domain" description="Vacuolar" evidence="2">
    <location>
        <begin position="98"/>
        <end position="901"/>
    </location>
</feature>
<feature type="region of interest" description="Disordered" evidence="3">
    <location>
        <begin position="1"/>
        <end position="67"/>
    </location>
</feature>
<feature type="compositionally biased region" description="Low complexity" evidence="3">
    <location>
        <begin position="1"/>
        <end position="22"/>
    </location>
</feature>
<feature type="active site" description="Charge relay system" evidence="1">
    <location>
        <position position="739"/>
    </location>
</feature>
<feature type="active site" description="Charge relay system" evidence="1">
    <location>
        <position position="816"/>
    </location>
</feature>
<feature type="active site" description="Charge relay system" evidence="1">
    <location>
        <position position="849"/>
    </location>
</feature>
<feature type="glycosylation site" description="N-linked (GlcNAc...) asparagine" evidence="2">
    <location>
        <position position="334"/>
    </location>
</feature>
<feature type="glycosylation site" description="N-linked (GlcNAc...) asparagine" evidence="2">
    <location>
        <position position="625"/>
    </location>
</feature>
<feature type="glycosylation site" description="N-linked (GlcNAc...) asparagine" evidence="2">
    <location>
        <position position="793"/>
    </location>
</feature>
<proteinExistence type="inferred from homology"/>
<sequence length="901" mass="101294">MSSPRPSTSSTSSDSGLSVDTTAYPEESKYTSTAPGAGGLSDENRYRDVEEGEAGADEPFLPSAKKQAASGSRTSRLIWGLVILCVAGWLWGLVLFVTQNRSAQQSVSEALQSHESGAISGSSSSGKPVTLEQVLTGQWLPRSHAVSWIAGPNGEDGLLVEQGEDQGKGYLRVDDIRSRKGDATSQESRVLMEKAIVQVDGRTIFPVSTWPSPNLNKVLLLSEREKNWRHSFTGKYWIFDVATQTAQPLDPSNPDGRVQLAIWSPTSDMVAFVRDNNLYLRKLSSKEVVPITKDGGADLFYGIPDWVYEEEVFSGNSVTWWSGDGKYVAFLRTNETAVPEFPVQYYLSRPSGKRPPPGLEDYPEVREIKYPKAGAPNPVVSLQFYDVEKQEVFSIEAPDNFEDDDRIIIEIVWGTEGKILVRATNRESDVLKVFLFDTKARTSKLVRVENVADIDGGWVEPTQYTWFIPADPSNGRPHDGYLDTVIHEGYEHLGYFTPLDNSEPILLTQGEWEVVDAPTAVDLRKGIVYFISTKESPTERHLYQVNLDGSNLKPLTDTSKPGYYDVSFSHGTGYALLSYRGPSIPWQAIVNTETDELKYEETIEDNAGLARMVDSYALPTEIYQNVTIDGFTLQVVERRPPHFNPAKKYPVLFYLYNGPRSQTVDRKFNIDFQSYVASSLGYIVVTVDGRGTGFSGRKTRCIVRGNLGYYEAYDQITTAKLWGEKPYVDETRMSIWGWSYGGFMTLKTLEQDAGQTFQYGMAVAPVTDWRHYDSIYTERYMHTPAHNPNGYDNTSITDMTALQQTVRFLVIHGASDDNVHIQNTLVLVDKLDLAGVQNYDLHFYPDSDHSINFHNAHRMVYERLSSWLVNAFNDEWHRIADPVPDDSMWEKVKRSLPMLVK</sequence>